<evidence type="ECO:0000250" key="1"/>
<evidence type="ECO:0000256" key="2">
    <source>
        <dbReference type="SAM" id="MobiDB-lite"/>
    </source>
</evidence>
<evidence type="ECO:0000305" key="3"/>
<reference key="1">
    <citation type="journal article" date="2015" name="Genome Announc.">
        <title>Draft genome sequence of the cellulolytic fungus Chaetomium globosum.</title>
        <authorList>
            <person name="Cuomo C.A."/>
            <person name="Untereiner W.A."/>
            <person name="Ma L.-J."/>
            <person name="Grabherr M."/>
            <person name="Birren B.W."/>
        </authorList>
    </citation>
    <scope>NUCLEOTIDE SEQUENCE [LARGE SCALE GENOMIC DNA]</scope>
    <source>
        <strain>ATCC 6205 / CBS 148.51 / DSM 1962 / NBRC 6347 / NRRL 1970</strain>
    </source>
</reference>
<dbReference type="EMBL" id="CH408033">
    <property type="protein sequence ID" value="EAQ86030.1"/>
    <property type="molecule type" value="Genomic_DNA"/>
</dbReference>
<dbReference type="RefSeq" id="XP_001224939.1">
    <property type="nucleotide sequence ID" value="XM_001224938.1"/>
</dbReference>
<dbReference type="FunCoup" id="Q2GXM1">
    <property type="interactions" value="90"/>
</dbReference>
<dbReference type="STRING" id="306901.Q2GXM1"/>
<dbReference type="GeneID" id="4394275"/>
<dbReference type="VEuPathDB" id="FungiDB:CHGG_07283"/>
<dbReference type="eggNOG" id="KOG1913">
    <property type="taxonomic scope" value="Eukaryota"/>
</dbReference>
<dbReference type="HOGENOM" id="CLU_001147_0_0_1"/>
<dbReference type="InParanoid" id="Q2GXM1"/>
<dbReference type="OMA" id="YKSPYDL"/>
<dbReference type="OrthoDB" id="8918678at2759"/>
<dbReference type="Proteomes" id="UP000001056">
    <property type="component" value="Unassembled WGS sequence"/>
</dbReference>
<dbReference type="GO" id="GO:0070971">
    <property type="term" value="C:endoplasmic reticulum exit site"/>
    <property type="evidence" value="ECO:0007669"/>
    <property type="project" value="UniProtKB-ARBA"/>
</dbReference>
<dbReference type="GO" id="GO:0005789">
    <property type="term" value="C:endoplasmic reticulum membrane"/>
    <property type="evidence" value="ECO:0007669"/>
    <property type="project" value="UniProtKB-SubCell"/>
</dbReference>
<dbReference type="GO" id="GO:0012507">
    <property type="term" value="C:ER to Golgi transport vesicle membrane"/>
    <property type="evidence" value="ECO:0007669"/>
    <property type="project" value="TreeGrafter"/>
</dbReference>
<dbReference type="GO" id="GO:0006914">
    <property type="term" value="P:autophagy"/>
    <property type="evidence" value="ECO:0007669"/>
    <property type="project" value="UniProtKB-KW"/>
</dbReference>
<dbReference type="GO" id="GO:0007030">
    <property type="term" value="P:Golgi organization"/>
    <property type="evidence" value="ECO:0007669"/>
    <property type="project" value="TreeGrafter"/>
</dbReference>
<dbReference type="GO" id="GO:0046907">
    <property type="term" value="P:intracellular transport"/>
    <property type="evidence" value="ECO:0007669"/>
    <property type="project" value="UniProtKB-ARBA"/>
</dbReference>
<dbReference type="GO" id="GO:0070973">
    <property type="term" value="P:protein localization to endoplasmic reticulum exit site"/>
    <property type="evidence" value="ECO:0007669"/>
    <property type="project" value="TreeGrafter"/>
</dbReference>
<dbReference type="GO" id="GO:0015031">
    <property type="term" value="P:protein transport"/>
    <property type="evidence" value="ECO:0007669"/>
    <property type="project" value="UniProtKB-KW"/>
</dbReference>
<dbReference type="GO" id="GO:0016192">
    <property type="term" value="P:vesicle-mediated transport"/>
    <property type="evidence" value="ECO:0007669"/>
    <property type="project" value="UniProtKB-KW"/>
</dbReference>
<dbReference type="CDD" id="cd09233">
    <property type="entry name" value="ACE1-Sec16-like"/>
    <property type="match status" value="1"/>
</dbReference>
<dbReference type="FunFam" id="1.25.40.1030:FF:000008">
    <property type="entry name" value="Protein transport protein sec16"/>
    <property type="match status" value="1"/>
</dbReference>
<dbReference type="Gene3D" id="1.25.40.1030">
    <property type="match status" value="1"/>
</dbReference>
<dbReference type="InterPro" id="IPR024340">
    <property type="entry name" value="Sec16_CCD"/>
</dbReference>
<dbReference type="InterPro" id="IPR024298">
    <property type="entry name" value="Sec16_Sec23-bd"/>
</dbReference>
<dbReference type="PANTHER" id="PTHR13402">
    <property type="entry name" value="RGPR-RELATED"/>
    <property type="match status" value="1"/>
</dbReference>
<dbReference type="PANTHER" id="PTHR13402:SF6">
    <property type="entry name" value="SECRETORY 16, ISOFORM I"/>
    <property type="match status" value="1"/>
</dbReference>
<dbReference type="Pfam" id="PF12932">
    <property type="entry name" value="Sec16"/>
    <property type="match status" value="1"/>
</dbReference>
<dbReference type="Pfam" id="PF12931">
    <property type="entry name" value="TPR_Sec16"/>
    <property type="match status" value="1"/>
</dbReference>
<accession>Q2GXM1</accession>
<name>SEC16_CHAGB</name>
<protein>
    <recommendedName>
        <fullName>COPII coat assembly protein SEC16</fullName>
    </recommendedName>
    <alternativeName>
        <fullName>Protein transport protein SEC16</fullName>
    </alternativeName>
</protein>
<sequence length="1865" mass="196681">MVSDAPNSSWHPAMMPNSIADLRNRREDTVPPSAPEGSVLEDNTTQSNTAGEESGAWFQDDGTGDDWLADTNNAPESEPTPAPASAPDTETPEQTGPAESVEEAVPEESSTTSKHLSTMSFTRTVPHEVNWNDDDDAEWSLPRTDTDPFKFIPETNRTNSFPTVSPLEDRAHGAAQEFDHPISFNPAEDLIREIEEEESREDGTLPGAAAESATQNAQDDTTTQQYLTGGPDAVANDALGARFEEGLPLVSSADQDATQEGQQEAGGDLFAEETVGEEDDFFSNVRSDEATQQDDDFQPTPVQRKSTMDVLNSLDMPSTGTGFVPLEETVEEPEAQESPQDQPKAQEGENLDEKWKEMFGDDDAEEGFLPDESTGPNELDASAFLGSDDEGLLEDSETEQQEQSQPLASPGYVSASGPSAQPVNGQYFPHNQGPAVPTPTNPYLPAVSPVTPAHSYLPAAPVSAAQPPTAAPYAPPSTAPPAPALAQFGYGAPPPTQEKNKAQSFVDKKGGYTSPYDLPMEVVKPKRRAGALPLQNNTSGPNSPSTMPPPPRSASMYSQPSPSTGAPTPGTARPASSHSAQAPSSGRKPSHESFFEDLPMTTKPRPASRPKPKSAAPNLVPAAPPVASSRYSPAPPGAPLTNGPAPAPVSSRYSPAPPAPRQPSGGHERSRAHAPVGHVEGSLAERRSSSSLHDHRLQRVPSLPSTREVEEEEVPTQAQASPGGPAPPHPMSPPVSRYAPSPQGARQTPPHTAPSGQTVLSPPKRVMSSHSPLAPPYDFAPPPRSQTQSPGALYGNRATKPVEPIPRPSSVHDPTSPREAAYPAAPASFAPVAPATTYGRPRVPRYGMNQSIPAVIRSPGEVKIQNIKDIIPFEERLAKFPGPLKGKSKKKETIAWLTAGIESLEQGLPTSFSLHTPFSHDDKRAVERVLLWKILRVFVEHDGVLEGNPTVDKAVRDLLSPGLEGADSTTPYVNGGGNFGLADPASAGLQSDGVSSSTVEQIRRQLLSGDHEKAIWAAADQRLWGHALLLSNALAPNLYKQVAQEFIKKEVNSPGRNNESLAALYGVLSGNHEESVDELVPSHARAGLQLVTTHAASSPSKDAMEGLDKWRETLGLILSNRSTDDGRAINSLGVLLSGYGRAEAAHVCFMFARNHTVFGGLDDPASHFVLVGSDHKKQAEQFAKEIEPLLLSEVYEYGQSLAGGFSVPVTNPHLAAYKLQHAIALAEYGFRDKALQYCDAIATAITSQTKRSPYHHPILENAVEDLMMRLKQAPREDSGSWIPKPTMNKVSDTVWSKFNKFVSGDDDGSGQGPTGEGEPGPFSRVAGGTPTISRSPSASNLETFGAAVPSYGMSSSLPNGPVPASAPATRAASRYAPGAPQATGSNSRPSTSAYAPRSSMERTSSELNRGSFEVPRRSLEMQAGHRGSYSPVRSGSPAAMYTPQSTDFGSPQQSPYQPVSHAQPTPFQAPTSAPQPVGYPGPPANGVAPGQESEAPGQSPEASGYQPPSYGYEPPSFTPYEAPTEEKDGTPEETPNGGSYEAPSYQPYSYEPPSYEPDTQPSNEDAGSDDESKPKPKKKGIMYDDDDDFPTPRPAEKSRAEKDRENDEMFRKAAEEDAQRVEAAKQAKKGWGFTSWFGGGGAKKDAATPDSKGANPNKPIRAKLGEANSFYYDPELKRWVNKNAGPEDTAKKATPPPPKAGAPRSVSASPASPPFSPGPGRGASAPPPMGGAGGPPRSASRPPTSSGSTDTTGLPGSPGSVAGGALGPPPGPVAMLRSVSNTSTASAPPLGGGGSGVGGGGGGGPPPSSRPPTSLSNSSSIDDLLGAAGPRKPGAARKARKGARYVDVMGEVKGWRGGEEWVRLG</sequence>
<gene>
    <name type="primary">SEC16</name>
    <name type="ORF">CHGG_07283</name>
</gene>
<feature type="chain" id="PRO_0000295534" description="COPII coat assembly protein SEC16">
    <location>
        <begin position="1"/>
        <end position="1865"/>
    </location>
</feature>
<feature type="region of interest" description="Disordered" evidence="2">
    <location>
        <begin position="1"/>
        <end position="166"/>
    </location>
</feature>
<feature type="region of interest" description="Disordered" evidence="2">
    <location>
        <begin position="193"/>
        <end position="820"/>
    </location>
</feature>
<feature type="region of interest" description="Disordered" evidence="2">
    <location>
        <begin position="1301"/>
        <end position="1339"/>
    </location>
</feature>
<feature type="region of interest" description="Disordered" evidence="2">
    <location>
        <begin position="1355"/>
        <end position="1665"/>
    </location>
</feature>
<feature type="region of interest" description="Disordered" evidence="2">
    <location>
        <begin position="1681"/>
        <end position="1842"/>
    </location>
</feature>
<feature type="compositionally biased region" description="Polar residues" evidence="2">
    <location>
        <begin position="1"/>
        <end position="10"/>
    </location>
</feature>
<feature type="compositionally biased region" description="Polar residues" evidence="2">
    <location>
        <begin position="41"/>
        <end position="51"/>
    </location>
</feature>
<feature type="compositionally biased region" description="Low complexity" evidence="2">
    <location>
        <begin position="85"/>
        <end position="99"/>
    </location>
</feature>
<feature type="compositionally biased region" description="Polar residues" evidence="2">
    <location>
        <begin position="114"/>
        <end position="123"/>
    </location>
</feature>
<feature type="compositionally biased region" description="Low complexity" evidence="2">
    <location>
        <begin position="213"/>
        <end position="225"/>
    </location>
</feature>
<feature type="compositionally biased region" description="Polar residues" evidence="2">
    <location>
        <begin position="252"/>
        <end position="262"/>
    </location>
</feature>
<feature type="compositionally biased region" description="Acidic residues" evidence="2">
    <location>
        <begin position="270"/>
        <end position="281"/>
    </location>
</feature>
<feature type="compositionally biased region" description="Basic and acidic residues" evidence="2">
    <location>
        <begin position="344"/>
        <end position="359"/>
    </location>
</feature>
<feature type="compositionally biased region" description="Acidic residues" evidence="2">
    <location>
        <begin position="360"/>
        <end position="369"/>
    </location>
</feature>
<feature type="compositionally biased region" description="Acidic residues" evidence="2">
    <location>
        <begin position="387"/>
        <end position="400"/>
    </location>
</feature>
<feature type="compositionally biased region" description="Pro residues" evidence="2">
    <location>
        <begin position="469"/>
        <end position="483"/>
    </location>
</feature>
<feature type="compositionally biased region" description="Basic and acidic residues" evidence="2">
    <location>
        <begin position="498"/>
        <end position="510"/>
    </location>
</feature>
<feature type="compositionally biased region" description="Low complexity" evidence="2">
    <location>
        <begin position="553"/>
        <end position="585"/>
    </location>
</feature>
<feature type="compositionally biased region" description="Low complexity" evidence="2">
    <location>
        <begin position="613"/>
        <end position="632"/>
    </location>
</feature>
<feature type="compositionally biased region" description="Basic and acidic residues" evidence="2">
    <location>
        <begin position="683"/>
        <end position="697"/>
    </location>
</feature>
<feature type="compositionally biased region" description="Pro residues" evidence="2">
    <location>
        <begin position="724"/>
        <end position="733"/>
    </location>
</feature>
<feature type="compositionally biased region" description="Polar residues" evidence="2">
    <location>
        <begin position="744"/>
        <end position="760"/>
    </location>
</feature>
<feature type="compositionally biased region" description="Pro residues" evidence="2">
    <location>
        <begin position="773"/>
        <end position="784"/>
    </location>
</feature>
<feature type="compositionally biased region" description="Gly residues" evidence="2">
    <location>
        <begin position="1309"/>
        <end position="1318"/>
    </location>
</feature>
<feature type="compositionally biased region" description="Polar residues" evidence="2">
    <location>
        <begin position="1330"/>
        <end position="1339"/>
    </location>
</feature>
<feature type="compositionally biased region" description="Low complexity" evidence="2">
    <location>
        <begin position="1362"/>
        <end position="1377"/>
    </location>
</feature>
<feature type="compositionally biased region" description="Polar residues" evidence="2">
    <location>
        <begin position="1382"/>
        <end position="1393"/>
    </location>
</feature>
<feature type="compositionally biased region" description="Polar residues" evidence="2">
    <location>
        <begin position="1442"/>
        <end position="1474"/>
    </location>
</feature>
<feature type="compositionally biased region" description="Low complexity" evidence="2">
    <location>
        <begin position="1539"/>
        <end position="1557"/>
    </location>
</feature>
<feature type="compositionally biased region" description="Basic and acidic residues" evidence="2">
    <location>
        <begin position="1594"/>
        <end position="1625"/>
    </location>
</feature>
<feature type="compositionally biased region" description="Low complexity" evidence="2">
    <location>
        <begin position="1701"/>
        <end position="1710"/>
    </location>
</feature>
<feature type="compositionally biased region" description="Low complexity" evidence="2">
    <location>
        <begin position="1735"/>
        <end position="1760"/>
    </location>
</feature>
<feature type="compositionally biased region" description="Gly residues" evidence="2">
    <location>
        <begin position="1790"/>
        <end position="1803"/>
    </location>
</feature>
<feature type="compositionally biased region" description="Low complexity" evidence="2">
    <location>
        <begin position="1811"/>
        <end position="1833"/>
    </location>
</feature>
<keyword id="KW-0072">Autophagy</keyword>
<keyword id="KW-0256">Endoplasmic reticulum</keyword>
<keyword id="KW-0931">ER-Golgi transport</keyword>
<keyword id="KW-0472">Membrane</keyword>
<keyword id="KW-0653">Protein transport</keyword>
<keyword id="KW-1185">Reference proteome</keyword>
<keyword id="KW-0813">Transport</keyword>
<organism>
    <name type="scientific">Chaetomium globosum (strain ATCC 6205 / CBS 148.51 / DSM 1962 / NBRC 6347 / NRRL 1970)</name>
    <name type="common">Soil fungus</name>
    <dbReference type="NCBI Taxonomy" id="306901"/>
    <lineage>
        <taxon>Eukaryota</taxon>
        <taxon>Fungi</taxon>
        <taxon>Dikarya</taxon>
        <taxon>Ascomycota</taxon>
        <taxon>Pezizomycotina</taxon>
        <taxon>Sordariomycetes</taxon>
        <taxon>Sordariomycetidae</taxon>
        <taxon>Sordariales</taxon>
        <taxon>Chaetomiaceae</taxon>
        <taxon>Chaetomium</taxon>
    </lineage>
</organism>
<comment type="function">
    <text evidence="1">Involved in the initiation of assembly of the COPII coat required for the formation of transport vesicles from the endoplasmic reticulum (ER) and the selection of cargo molecules. Also involved in autophagy (By similarity).</text>
</comment>
<comment type="subcellular location">
    <subcellularLocation>
        <location evidence="1">Endoplasmic reticulum membrane</location>
        <topology evidence="1">Peripheral membrane protein</topology>
        <orientation evidence="1">Cytoplasmic side</orientation>
    </subcellularLocation>
</comment>
<comment type="similarity">
    <text evidence="3">Belongs to the SEC16 family.</text>
</comment>
<proteinExistence type="inferred from homology"/>